<gene>
    <name evidence="1" type="primary">rpsU</name>
    <name type="ordered locus">SNSL254_A3469</name>
</gene>
<reference key="1">
    <citation type="journal article" date="2011" name="J. Bacteriol.">
        <title>Comparative genomics of 28 Salmonella enterica isolates: evidence for CRISPR-mediated adaptive sublineage evolution.</title>
        <authorList>
            <person name="Fricke W.F."/>
            <person name="Mammel M.K."/>
            <person name="McDermott P.F."/>
            <person name="Tartera C."/>
            <person name="White D.G."/>
            <person name="Leclerc J.E."/>
            <person name="Ravel J."/>
            <person name="Cebula T.A."/>
        </authorList>
    </citation>
    <scope>NUCLEOTIDE SEQUENCE [LARGE SCALE GENOMIC DNA]</scope>
    <source>
        <strain>SL254</strain>
    </source>
</reference>
<dbReference type="EMBL" id="CP001113">
    <property type="protein sequence ID" value="ACF63010.1"/>
    <property type="molecule type" value="Genomic_DNA"/>
</dbReference>
<dbReference type="RefSeq" id="WP_001144069.1">
    <property type="nucleotide sequence ID" value="NZ_CCMR01000001.1"/>
</dbReference>
<dbReference type="SMR" id="B4T679"/>
<dbReference type="GeneID" id="98390195"/>
<dbReference type="KEGG" id="see:SNSL254_A3469"/>
<dbReference type="HOGENOM" id="CLU_159258_1_0_6"/>
<dbReference type="Proteomes" id="UP000008824">
    <property type="component" value="Chromosome"/>
</dbReference>
<dbReference type="GO" id="GO:1990904">
    <property type="term" value="C:ribonucleoprotein complex"/>
    <property type="evidence" value="ECO:0007669"/>
    <property type="project" value="UniProtKB-KW"/>
</dbReference>
<dbReference type="GO" id="GO:0005840">
    <property type="term" value="C:ribosome"/>
    <property type="evidence" value="ECO:0007669"/>
    <property type="project" value="UniProtKB-KW"/>
</dbReference>
<dbReference type="GO" id="GO:0003735">
    <property type="term" value="F:structural constituent of ribosome"/>
    <property type="evidence" value="ECO:0007669"/>
    <property type="project" value="InterPro"/>
</dbReference>
<dbReference type="GO" id="GO:0006412">
    <property type="term" value="P:translation"/>
    <property type="evidence" value="ECO:0007669"/>
    <property type="project" value="UniProtKB-UniRule"/>
</dbReference>
<dbReference type="FunFam" id="1.20.5.1150:FF:000001">
    <property type="entry name" value="30S ribosomal protein S21"/>
    <property type="match status" value="1"/>
</dbReference>
<dbReference type="Gene3D" id="1.20.5.1150">
    <property type="entry name" value="Ribosomal protein S8"/>
    <property type="match status" value="1"/>
</dbReference>
<dbReference type="HAMAP" id="MF_00358">
    <property type="entry name" value="Ribosomal_bS21"/>
    <property type="match status" value="1"/>
</dbReference>
<dbReference type="InterPro" id="IPR001911">
    <property type="entry name" value="Ribosomal_bS21"/>
</dbReference>
<dbReference type="InterPro" id="IPR018278">
    <property type="entry name" value="Ribosomal_bS21_CS"/>
</dbReference>
<dbReference type="InterPro" id="IPR038380">
    <property type="entry name" value="Ribosomal_bS21_sf"/>
</dbReference>
<dbReference type="NCBIfam" id="TIGR00030">
    <property type="entry name" value="S21p"/>
    <property type="match status" value="1"/>
</dbReference>
<dbReference type="PANTHER" id="PTHR21109">
    <property type="entry name" value="MITOCHONDRIAL 28S RIBOSOMAL PROTEIN S21"/>
    <property type="match status" value="1"/>
</dbReference>
<dbReference type="PANTHER" id="PTHR21109:SF22">
    <property type="entry name" value="SMALL RIBOSOMAL SUBUNIT PROTEIN BS21"/>
    <property type="match status" value="1"/>
</dbReference>
<dbReference type="Pfam" id="PF01165">
    <property type="entry name" value="Ribosomal_S21"/>
    <property type="match status" value="1"/>
</dbReference>
<dbReference type="PRINTS" id="PR00976">
    <property type="entry name" value="RIBOSOMALS21"/>
</dbReference>
<dbReference type="PROSITE" id="PS01181">
    <property type="entry name" value="RIBOSOMAL_S21"/>
    <property type="match status" value="1"/>
</dbReference>
<sequence>MPVIKVRENEPFDVALRRFKRSCEKAGVLAEVRRREFYEKPTTERKRAKASAVKRHAKKLARENARRTRLY</sequence>
<name>RS21_SALNS</name>
<evidence type="ECO:0000255" key="1">
    <source>
        <dbReference type="HAMAP-Rule" id="MF_00358"/>
    </source>
</evidence>
<evidence type="ECO:0000256" key="2">
    <source>
        <dbReference type="SAM" id="MobiDB-lite"/>
    </source>
</evidence>
<evidence type="ECO:0000305" key="3"/>
<comment type="similarity">
    <text evidence="1">Belongs to the bacterial ribosomal protein bS21 family.</text>
</comment>
<proteinExistence type="inferred from homology"/>
<keyword id="KW-0687">Ribonucleoprotein</keyword>
<keyword id="KW-0689">Ribosomal protein</keyword>
<accession>B4T679</accession>
<feature type="chain" id="PRO_1000120659" description="Small ribosomal subunit protein bS21">
    <location>
        <begin position="1"/>
        <end position="71"/>
    </location>
</feature>
<feature type="region of interest" description="Disordered" evidence="2">
    <location>
        <begin position="43"/>
        <end position="71"/>
    </location>
</feature>
<feature type="compositionally biased region" description="Basic residues" evidence="2">
    <location>
        <begin position="46"/>
        <end position="59"/>
    </location>
</feature>
<feature type="compositionally biased region" description="Basic and acidic residues" evidence="2">
    <location>
        <begin position="60"/>
        <end position="71"/>
    </location>
</feature>
<protein>
    <recommendedName>
        <fullName evidence="1">Small ribosomal subunit protein bS21</fullName>
    </recommendedName>
    <alternativeName>
        <fullName evidence="3">30S ribosomal protein S21</fullName>
    </alternativeName>
</protein>
<organism>
    <name type="scientific">Salmonella newport (strain SL254)</name>
    <dbReference type="NCBI Taxonomy" id="423368"/>
    <lineage>
        <taxon>Bacteria</taxon>
        <taxon>Pseudomonadati</taxon>
        <taxon>Pseudomonadota</taxon>
        <taxon>Gammaproteobacteria</taxon>
        <taxon>Enterobacterales</taxon>
        <taxon>Enterobacteriaceae</taxon>
        <taxon>Salmonella</taxon>
    </lineage>
</organism>